<name>STX5_DROME</name>
<proteinExistence type="evidence at transcript level"/>
<feature type="chain" id="PRO_0000210237" description="Syntaxin-5">
    <location>
        <begin position="1"/>
        <end position="467"/>
    </location>
</feature>
<feature type="topological domain" description="Cytoplasmic" evidence="2">
    <location>
        <begin position="1"/>
        <end position="445"/>
    </location>
</feature>
<feature type="transmembrane region" description="Helical; Anchor for type IV membrane protein" evidence="2">
    <location>
        <begin position="446"/>
        <end position="466"/>
    </location>
</feature>
<feature type="topological domain" description="Vesicular" evidence="2">
    <location>
        <position position="467"/>
    </location>
</feature>
<feature type="domain" description="t-SNARE coiled-coil homology" evidence="3">
    <location>
        <begin position="375"/>
        <end position="437"/>
    </location>
</feature>
<feature type="region of interest" description="Disordered" evidence="4">
    <location>
        <begin position="1"/>
        <end position="53"/>
    </location>
</feature>
<feature type="region of interest" description="Disordered" evidence="4">
    <location>
        <begin position="58"/>
        <end position="77"/>
    </location>
</feature>
<feature type="region of interest" description="Disordered" evidence="4">
    <location>
        <begin position="310"/>
        <end position="335"/>
    </location>
</feature>
<feature type="coiled-coil region" evidence="2">
    <location>
        <begin position="245"/>
        <end position="269"/>
    </location>
</feature>
<feature type="compositionally biased region" description="Low complexity" evidence="4">
    <location>
        <begin position="10"/>
        <end position="22"/>
    </location>
</feature>
<feature type="compositionally biased region" description="Gly residues" evidence="4">
    <location>
        <begin position="29"/>
        <end position="45"/>
    </location>
</feature>
<feature type="compositionally biased region" description="Polar residues" evidence="4">
    <location>
        <begin position="68"/>
        <end position="77"/>
    </location>
</feature>
<comment type="function">
    <text evidence="1">Mediates endoplasmic reticulum to Golgi transport.</text>
</comment>
<comment type="subunit">
    <text evidence="7">Homodimer.</text>
</comment>
<comment type="subcellular location">
    <subcellularLocation>
        <location evidence="7">Golgi apparatus</location>
        <location evidence="7">cis-Golgi network membrane</location>
        <topology evidence="7">Single-pass type IV membrane protein</topology>
    </subcellularLocation>
</comment>
<comment type="similarity">
    <text evidence="8">Belongs to the syntaxin family.</text>
</comment>
<gene>
    <name evidence="9" type="primary">Syx5</name>
    <name type="synonym">Sed5</name>
    <name type="ORF">CG4214</name>
</gene>
<dbReference type="EMBL" id="AE014134">
    <property type="protein sequence ID" value="AAF53520.2"/>
    <property type="molecule type" value="Genomic_DNA"/>
</dbReference>
<dbReference type="EMBL" id="AY069832">
    <property type="protein sequence ID" value="AAL39977.1"/>
    <property type="molecule type" value="mRNA"/>
</dbReference>
<dbReference type="EMBL" id="X78219">
    <property type="protein sequence ID" value="CAA55064.1"/>
    <property type="molecule type" value="mRNA"/>
</dbReference>
<dbReference type="PIR" id="S43101">
    <property type="entry name" value="S43101"/>
</dbReference>
<dbReference type="RefSeq" id="NP_523582.4">
    <property type="nucleotide sequence ID" value="NM_078858.5"/>
</dbReference>
<dbReference type="RefSeq" id="NP_599132.2">
    <property type="nucleotide sequence ID" value="NM_134305.3"/>
</dbReference>
<dbReference type="SMR" id="Q24509"/>
<dbReference type="BioGRID" id="60977">
    <property type="interactions" value="32"/>
</dbReference>
<dbReference type="FunCoup" id="Q24509">
    <property type="interactions" value="2294"/>
</dbReference>
<dbReference type="IntAct" id="Q24509">
    <property type="interactions" value="27"/>
</dbReference>
<dbReference type="STRING" id="7227.FBpp0080390"/>
<dbReference type="PaxDb" id="7227-FBpp0080389"/>
<dbReference type="DNASU" id="34966"/>
<dbReference type="EnsemblMetazoa" id="FBtr0080831">
    <property type="protein sequence ID" value="FBpp0080389"/>
    <property type="gene ID" value="FBgn0011708"/>
</dbReference>
<dbReference type="EnsemblMetazoa" id="FBtr0080832">
    <property type="protein sequence ID" value="FBpp0080390"/>
    <property type="gene ID" value="FBgn0011708"/>
</dbReference>
<dbReference type="GeneID" id="34966"/>
<dbReference type="KEGG" id="dme:Dmel_CG4214"/>
<dbReference type="AGR" id="FB:FBgn0011708"/>
<dbReference type="CTD" id="34966"/>
<dbReference type="FlyBase" id="FBgn0011708">
    <property type="gene designation" value="Syx5"/>
</dbReference>
<dbReference type="VEuPathDB" id="VectorBase:FBgn0011708"/>
<dbReference type="eggNOG" id="KOG0812">
    <property type="taxonomic scope" value="Eukaryota"/>
</dbReference>
<dbReference type="GeneTree" id="ENSGT01000000214440"/>
<dbReference type="HOGENOM" id="CLU_044998_1_1_1"/>
<dbReference type="InParanoid" id="Q24509"/>
<dbReference type="OMA" id="EHNHNVV"/>
<dbReference type="OrthoDB" id="421009at2759"/>
<dbReference type="PhylomeDB" id="Q24509"/>
<dbReference type="Reactome" id="R-DME-204005">
    <property type="pathway name" value="COPII-mediated vesicle transport"/>
</dbReference>
<dbReference type="Reactome" id="R-DME-5694530">
    <property type="pathway name" value="Cargo concentration in the ER"/>
</dbReference>
<dbReference type="Reactome" id="R-DME-6807878">
    <property type="pathway name" value="COPI-mediated anterograde transport"/>
</dbReference>
<dbReference type="Reactome" id="R-DME-6811438">
    <property type="pathway name" value="Intra-Golgi traffic"/>
</dbReference>
<dbReference type="Reactome" id="R-DME-9609523">
    <property type="pathway name" value="Insertion of tail-anchored proteins into the endoplasmic reticulum membrane"/>
</dbReference>
<dbReference type="BioGRID-ORCS" id="34966">
    <property type="hits" value="0 hits in 1 CRISPR screen"/>
</dbReference>
<dbReference type="GenomeRNAi" id="34966"/>
<dbReference type="PRO" id="PR:Q24509"/>
<dbReference type="Proteomes" id="UP000000803">
    <property type="component" value="Chromosome 2L"/>
</dbReference>
<dbReference type="Bgee" id="FBgn0011708">
    <property type="expression patterns" value="Expressed in spermathecum and 170 other cell types or tissues"/>
</dbReference>
<dbReference type="ExpressionAtlas" id="Q24509">
    <property type="expression patterns" value="baseline and differential"/>
</dbReference>
<dbReference type="GO" id="GO:0005801">
    <property type="term" value="C:cis-Golgi network"/>
    <property type="evidence" value="ECO:0000314"/>
    <property type="project" value="UniProtKB"/>
</dbReference>
<dbReference type="GO" id="GO:0012505">
    <property type="term" value="C:endomembrane system"/>
    <property type="evidence" value="ECO:0007005"/>
    <property type="project" value="FlyBase"/>
</dbReference>
<dbReference type="GO" id="GO:0005794">
    <property type="term" value="C:Golgi apparatus"/>
    <property type="evidence" value="ECO:0000314"/>
    <property type="project" value="FlyBase"/>
</dbReference>
<dbReference type="GO" id="GO:0000139">
    <property type="term" value="C:Golgi membrane"/>
    <property type="evidence" value="ECO:0000250"/>
    <property type="project" value="UniProtKB"/>
</dbReference>
<dbReference type="GO" id="GO:0031201">
    <property type="term" value="C:SNARE complex"/>
    <property type="evidence" value="ECO:0000255"/>
    <property type="project" value="FlyBase"/>
</dbReference>
<dbReference type="GO" id="GO:0042803">
    <property type="term" value="F:protein homodimerization activity"/>
    <property type="evidence" value="ECO:0000353"/>
    <property type="project" value="UniProtKB"/>
</dbReference>
<dbReference type="GO" id="GO:0005484">
    <property type="term" value="F:SNAP receptor activity"/>
    <property type="evidence" value="ECO:0000353"/>
    <property type="project" value="FlyBase"/>
</dbReference>
<dbReference type="GO" id="GO:0000149">
    <property type="term" value="F:SNARE binding"/>
    <property type="evidence" value="ECO:0000255"/>
    <property type="project" value="FlyBase"/>
</dbReference>
<dbReference type="GO" id="GO:0055070">
    <property type="term" value="P:copper ion homeostasis"/>
    <property type="evidence" value="ECO:0000315"/>
    <property type="project" value="FlyBase"/>
</dbReference>
<dbReference type="GO" id="GO:0006888">
    <property type="term" value="P:endoplasmic reticulum to Golgi vesicle-mediated transport"/>
    <property type="evidence" value="ECO:0000318"/>
    <property type="project" value="GO_Central"/>
</dbReference>
<dbReference type="GO" id="GO:0006887">
    <property type="term" value="P:exocytosis"/>
    <property type="evidence" value="ECO:0000315"/>
    <property type="project" value="FlyBase"/>
</dbReference>
<dbReference type="GO" id="GO:0006878">
    <property type="term" value="P:intracellular copper ion homeostasis"/>
    <property type="evidence" value="ECO:0000315"/>
    <property type="project" value="FlyBase"/>
</dbReference>
<dbReference type="GO" id="GO:0006886">
    <property type="term" value="P:intracellular protein transport"/>
    <property type="evidence" value="ECO:0000318"/>
    <property type="project" value="GO_Central"/>
</dbReference>
<dbReference type="GO" id="GO:0035167">
    <property type="term" value="P:larval lymph gland hemopoiesis"/>
    <property type="evidence" value="ECO:0000315"/>
    <property type="project" value="FlyBase"/>
</dbReference>
<dbReference type="GO" id="GO:0007112">
    <property type="term" value="P:male meiosis cytokinesis"/>
    <property type="evidence" value="ECO:0000315"/>
    <property type="project" value="FlyBase"/>
</dbReference>
<dbReference type="GO" id="GO:0007283">
    <property type="term" value="P:spermatogenesis"/>
    <property type="evidence" value="ECO:0000315"/>
    <property type="project" value="FlyBase"/>
</dbReference>
<dbReference type="GO" id="GO:0048278">
    <property type="term" value="P:vesicle docking"/>
    <property type="evidence" value="ECO:0000318"/>
    <property type="project" value="GO_Central"/>
</dbReference>
<dbReference type="GO" id="GO:0006906">
    <property type="term" value="P:vesicle fusion"/>
    <property type="evidence" value="ECO:0000318"/>
    <property type="project" value="GO_Central"/>
</dbReference>
<dbReference type="CDD" id="cd15844">
    <property type="entry name" value="SNARE_syntaxin5"/>
    <property type="match status" value="1"/>
</dbReference>
<dbReference type="FunFam" id="1.20.58.70:FF:000022">
    <property type="entry name" value="Syntaxin-5"/>
    <property type="match status" value="1"/>
</dbReference>
<dbReference type="Gene3D" id="1.20.58.70">
    <property type="match status" value="1"/>
</dbReference>
<dbReference type="InterPro" id="IPR010989">
    <property type="entry name" value="SNARE"/>
</dbReference>
<dbReference type="InterPro" id="IPR045242">
    <property type="entry name" value="Syntaxin"/>
</dbReference>
<dbReference type="InterPro" id="IPR006012">
    <property type="entry name" value="Syntaxin/epimorphin_CS"/>
</dbReference>
<dbReference type="InterPro" id="IPR000727">
    <property type="entry name" value="T_SNARE_dom"/>
</dbReference>
<dbReference type="PANTHER" id="PTHR19957">
    <property type="entry name" value="SYNTAXIN"/>
    <property type="match status" value="1"/>
</dbReference>
<dbReference type="PANTHER" id="PTHR19957:SF3">
    <property type="entry name" value="SYNTAXIN-5"/>
    <property type="match status" value="1"/>
</dbReference>
<dbReference type="Pfam" id="PF05739">
    <property type="entry name" value="SNARE"/>
    <property type="match status" value="1"/>
</dbReference>
<dbReference type="SMART" id="SM00397">
    <property type="entry name" value="t_SNARE"/>
    <property type="match status" value="1"/>
</dbReference>
<dbReference type="SUPFAM" id="SSF47661">
    <property type="entry name" value="t-snare proteins"/>
    <property type="match status" value="1"/>
</dbReference>
<dbReference type="PROSITE" id="PS00914">
    <property type="entry name" value="SYNTAXIN"/>
    <property type="match status" value="1"/>
</dbReference>
<dbReference type="PROSITE" id="PS50192">
    <property type="entry name" value="T_SNARE"/>
    <property type="match status" value="1"/>
</dbReference>
<sequence>MQTRRRLHQTDQQDYSSSSTYTIQEDQQGGAGAGSVGTGTAGGSVGLLAQSLVPPPTGHEAAIHIGDNYQSGDSISTPDYSDDKYGKAARQWNLRAFSGHALRTLSAAAAVVTGNQPGINNDSQSNYSYPASIPTSSQFYQSKEEPQETEPEPEIFVMAARDRTGEFANAIRSLQARNITRAVNIRDPRKAKQVQSYSEFMMVARFIGKNIASTYAKLEKLTMLAKKKSLFDDRPQEIQELTYIIKGDLNALNQQIARLQDISKDQRRHTNGKHLVSHSSNMVLALQSKLASMSTDFKQILEVRTENLKQQKTRRDQFSQGPGPLAAHTVSPSTAKQGSLLLSEENQAVSIDMGSSDTTPLLSTQTQMAIYDDSDNYVQQRAETMQNIESTIVELGGIFQQLAHMVKEQEEIVERIDTNVADAELNIEAAHGEILKYFQSVSKNRWLMIKIFGVLIFFFLFFVVFMS</sequence>
<organism>
    <name type="scientific">Drosophila melanogaster</name>
    <name type="common">Fruit fly</name>
    <dbReference type="NCBI Taxonomy" id="7227"/>
    <lineage>
        <taxon>Eukaryota</taxon>
        <taxon>Metazoa</taxon>
        <taxon>Ecdysozoa</taxon>
        <taxon>Arthropoda</taxon>
        <taxon>Hexapoda</taxon>
        <taxon>Insecta</taxon>
        <taxon>Pterygota</taxon>
        <taxon>Neoptera</taxon>
        <taxon>Endopterygota</taxon>
        <taxon>Diptera</taxon>
        <taxon>Brachycera</taxon>
        <taxon>Muscomorpha</taxon>
        <taxon>Ephydroidea</taxon>
        <taxon>Drosophilidae</taxon>
        <taxon>Drosophila</taxon>
        <taxon>Sophophora</taxon>
    </lineage>
</organism>
<accession>Q24509</accession>
<accession>Q7KW50</accession>
<accession>Q8T9C1</accession>
<evidence type="ECO:0000250" key="1">
    <source>
        <dbReference type="UniProtKB" id="Q08851"/>
    </source>
</evidence>
<evidence type="ECO:0000255" key="2"/>
<evidence type="ECO:0000255" key="3">
    <source>
        <dbReference type="PROSITE-ProRule" id="PRU00202"/>
    </source>
</evidence>
<evidence type="ECO:0000256" key="4">
    <source>
        <dbReference type="SAM" id="MobiDB-lite"/>
    </source>
</evidence>
<evidence type="ECO:0000269" key="5">
    <source>
    </source>
</evidence>
<evidence type="ECO:0000269" key="6">
    <source>
    </source>
</evidence>
<evidence type="ECO:0000269" key="7">
    <source>
    </source>
</evidence>
<evidence type="ECO:0000305" key="8"/>
<evidence type="ECO:0000312" key="9">
    <source>
        <dbReference type="EMBL" id="AAF53520.2"/>
    </source>
</evidence>
<evidence type="ECO:0000312" key="10">
    <source>
        <dbReference type="EMBL" id="AAL39977.1"/>
    </source>
</evidence>
<evidence type="ECO:0000312" key="11">
    <source>
        <dbReference type="EMBL" id="CAA55064.1"/>
    </source>
</evidence>
<protein>
    <recommendedName>
        <fullName>Syntaxin-5</fullName>
    </recommendedName>
    <alternativeName>
        <fullName>Sed5 protein</fullName>
    </alternativeName>
    <alternativeName>
        <fullName>dSed5</fullName>
    </alternativeName>
</protein>
<keyword id="KW-0175">Coiled coil</keyword>
<keyword id="KW-0931">ER-Golgi transport</keyword>
<keyword id="KW-0333">Golgi apparatus</keyword>
<keyword id="KW-0472">Membrane</keyword>
<keyword id="KW-1185">Reference proteome</keyword>
<keyword id="KW-0812">Transmembrane</keyword>
<keyword id="KW-1133">Transmembrane helix</keyword>
<keyword id="KW-0813">Transport</keyword>
<reference key="1">
    <citation type="journal article" date="1999" name="Genetics">
        <title>An exploration of the sequence of a 2.9-Mb region of the genome of Drosophila melanogaster: the Adh region.</title>
        <authorList>
            <person name="Ashburner M."/>
            <person name="Misra S."/>
            <person name="Roote J."/>
            <person name="Lewis S.E."/>
            <person name="Blazej R.G."/>
            <person name="Davis T."/>
            <person name="Doyle C."/>
            <person name="Galle R.F."/>
            <person name="George R.A."/>
            <person name="Harris N.L."/>
            <person name="Hartzell G."/>
            <person name="Harvey D.A."/>
            <person name="Hong L."/>
            <person name="Houston K.A."/>
            <person name="Hoskins R.A."/>
            <person name="Johnson G."/>
            <person name="Martin C."/>
            <person name="Moshrefi A.R."/>
            <person name="Palazzolo M."/>
            <person name="Reese M.G."/>
            <person name="Spradling A.C."/>
            <person name="Tsang G."/>
            <person name="Wan K.H."/>
            <person name="Whitelaw K."/>
            <person name="Celniker S.E."/>
            <person name="Rubin G.M."/>
        </authorList>
    </citation>
    <scope>NUCLEOTIDE SEQUENCE [LARGE SCALE GENOMIC DNA]</scope>
    <source>
        <strain>Berkeley</strain>
    </source>
</reference>
<reference evidence="9" key="2">
    <citation type="journal article" date="2000" name="Science">
        <title>The genome sequence of Drosophila melanogaster.</title>
        <authorList>
            <person name="Adams M.D."/>
            <person name="Celniker S.E."/>
            <person name="Holt R.A."/>
            <person name="Evans C.A."/>
            <person name="Gocayne J.D."/>
            <person name="Amanatides P.G."/>
            <person name="Scherer S.E."/>
            <person name="Li P.W."/>
            <person name="Hoskins R.A."/>
            <person name="Galle R.F."/>
            <person name="George R.A."/>
            <person name="Lewis S.E."/>
            <person name="Richards S."/>
            <person name="Ashburner M."/>
            <person name="Henderson S.N."/>
            <person name="Sutton G.G."/>
            <person name="Wortman J.R."/>
            <person name="Yandell M.D."/>
            <person name="Zhang Q."/>
            <person name="Chen L.X."/>
            <person name="Brandon R.C."/>
            <person name="Rogers Y.-H.C."/>
            <person name="Blazej R.G."/>
            <person name="Champe M."/>
            <person name="Pfeiffer B.D."/>
            <person name="Wan K.H."/>
            <person name="Doyle C."/>
            <person name="Baxter E.G."/>
            <person name="Helt G."/>
            <person name="Nelson C.R."/>
            <person name="Miklos G.L.G."/>
            <person name="Abril J.F."/>
            <person name="Agbayani A."/>
            <person name="An H.-J."/>
            <person name="Andrews-Pfannkoch C."/>
            <person name="Baldwin D."/>
            <person name="Ballew R.M."/>
            <person name="Basu A."/>
            <person name="Baxendale J."/>
            <person name="Bayraktaroglu L."/>
            <person name="Beasley E.M."/>
            <person name="Beeson K.Y."/>
            <person name="Benos P.V."/>
            <person name="Berman B.P."/>
            <person name="Bhandari D."/>
            <person name="Bolshakov S."/>
            <person name="Borkova D."/>
            <person name="Botchan M.R."/>
            <person name="Bouck J."/>
            <person name="Brokstein P."/>
            <person name="Brottier P."/>
            <person name="Burtis K.C."/>
            <person name="Busam D.A."/>
            <person name="Butler H."/>
            <person name="Cadieu E."/>
            <person name="Center A."/>
            <person name="Chandra I."/>
            <person name="Cherry J.M."/>
            <person name="Cawley S."/>
            <person name="Dahlke C."/>
            <person name="Davenport L.B."/>
            <person name="Davies P."/>
            <person name="de Pablos B."/>
            <person name="Delcher A."/>
            <person name="Deng Z."/>
            <person name="Mays A.D."/>
            <person name="Dew I."/>
            <person name="Dietz S.M."/>
            <person name="Dodson K."/>
            <person name="Doup L.E."/>
            <person name="Downes M."/>
            <person name="Dugan-Rocha S."/>
            <person name="Dunkov B.C."/>
            <person name="Dunn P."/>
            <person name="Durbin K.J."/>
            <person name="Evangelista C.C."/>
            <person name="Ferraz C."/>
            <person name="Ferriera S."/>
            <person name="Fleischmann W."/>
            <person name="Fosler C."/>
            <person name="Gabrielian A.E."/>
            <person name="Garg N.S."/>
            <person name="Gelbart W.M."/>
            <person name="Glasser K."/>
            <person name="Glodek A."/>
            <person name="Gong F."/>
            <person name="Gorrell J.H."/>
            <person name="Gu Z."/>
            <person name="Guan P."/>
            <person name="Harris M."/>
            <person name="Harris N.L."/>
            <person name="Harvey D.A."/>
            <person name="Heiman T.J."/>
            <person name="Hernandez J.R."/>
            <person name="Houck J."/>
            <person name="Hostin D."/>
            <person name="Houston K.A."/>
            <person name="Howland T.J."/>
            <person name="Wei M.-H."/>
            <person name="Ibegwam C."/>
            <person name="Jalali M."/>
            <person name="Kalush F."/>
            <person name="Karpen G.H."/>
            <person name="Ke Z."/>
            <person name="Kennison J.A."/>
            <person name="Ketchum K.A."/>
            <person name="Kimmel B.E."/>
            <person name="Kodira C.D."/>
            <person name="Kraft C.L."/>
            <person name="Kravitz S."/>
            <person name="Kulp D."/>
            <person name="Lai Z."/>
            <person name="Lasko P."/>
            <person name="Lei Y."/>
            <person name="Levitsky A.A."/>
            <person name="Li J.H."/>
            <person name="Li Z."/>
            <person name="Liang Y."/>
            <person name="Lin X."/>
            <person name="Liu X."/>
            <person name="Mattei B."/>
            <person name="McIntosh T.C."/>
            <person name="McLeod M.P."/>
            <person name="McPherson D."/>
            <person name="Merkulov G."/>
            <person name="Milshina N.V."/>
            <person name="Mobarry C."/>
            <person name="Morris J."/>
            <person name="Moshrefi A."/>
            <person name="Mount S.M."/>
            <person name="Moy M."/>
            <person name="Murphy B."/>
            <person name="Murphy L."/>
            <person name="Muzny D.M."/>
            <person name="Nelson D.L."/>
            <person name="Nelson D.R."/>
            <person name="Nelson K.A."/>
            <person name="Nixon K."/>
            <person name="Nusskern D.R."/>
            <person name="Pacleb J.M."/>
            <person name="Palazzolo M."/>
            <person name="Pittman G.S."/>
            <person name="Pan S."/>
            <person name="Pollard J."/>
            <person name="Puri V."/>
            <person name="Reese M.G."/>
            <person name="Reinert K."/>
            <person name="Remington K."/>
            <person name="Saunders R.D.C."/>
            <person name="Scheeler F."/>
            <person name="Shen H."/>
            <person name="Shue B.C."/>
            <person name="Siden-Kiamos I."/>
            <person name="Simpson M."/>
            <person name="Skupski M.P."/>
            <person name="Smith T.J."/>
            <person name="Spier E."/>
            <person name="Spradling A.C."/>
            <person name="Stapleton M."/>
            <person name="Strong R."/>
            <person name="Sun E."/>
            <person name="Svirskas R."/>
            <person name="Tector C."/>
            <person name="Turner R."/>
            <person name="Venter E."/>
            <person name="Wang A.H."/>
            <person name="Wang X."/>
            <person name="Wang Z.-Y."/>
            <person name="Wassarman D.A."/>
            <person name="Weinstock G.M."/>
            <person name="Weissenbach J."/>
            <person name="Williams S.M."/>
            <person name="Woodage T."/>
            <person name="Worley K.C."/>
            <person name="Wu D."/>
            <person name="Yang S."/>
            <person name="Yao Q.A."/>
            <person name="Ye J."/>
            <person name="Yeh R.-F."/>
            <person name="Zaveri J.S."/>
            <person name="Zhan M."/>
            <person name="Zhang G."/>
            <person name="Zhao Q."/>
            <person name="Zheng L."/>
            <person name="Zheng X.H."/>
            <person name="Zhong F.N."/>
            <person name="Zhong W."/>
            <person name="Zhou X."/>
            <person name="Zhu S.C."/>
            <person name="Zhu X."/>
            <person name="Smith H.O."/>
            <person name="Gibbs R.A."/>
            <person name="Myers E.W."/>
            <person name="Rubin G.M."/>
            <person name="Venter J.C."/>
        </authorList>
    </citation>
    <scope>NUCLEOTIDE SEQUENCE [LARGE SCALE GENOMIC DNA]</scope>
    <source>
        <strain evidence="5">Berkeley</strain>
    </source>
</reference>
<reference evidence="8 9" key="3">
    <citation type="journal article" date="2002" name="Genome Biol.">
        <title>Annotation of the Drosophila melanogaster euchromatic genome: a systematic review.</title>
        <authorList>
            <person name="Misra S."/>
            <person name="Crosby M.A."/>
            <person name="Mungall C.J."/>
            <person name="Matthews B.B."/>
            <person name="Campbell K.S."/>
            <person name="Hradecky P."/>
            <person name="Huang Y."/>
            <person name="Kaminker J.S."/>
            <person name="Millburn G.H."/>
            <person name="Prochnik S.E."/>
            <person name="Smith C.D."/>
            <person name="Tupy J.L."/>
            <person name="Whitfield E.J."/>
            <person name="Bayraktaroglu L."/>
            <person name="Berman B.P."/>
            <person name="Bettencourt B.R."/>
            <person name="Celniker S.E."/>
            <person name="de Grey A.D.N.J."/>
            <person name="Drysdale R.A."/>
            <person name="Harris N.L."/>
            <person name="Richter J."/>
            <person name="Russo S."/>
            <person name="Schroeder A.J."/>
            <person name="Shu S.Q."/>
            <person name="Stapleton M."/>
            <person name="Yamada C."/>
            <person name="Ashburner M."/>
            <person name="Gelbart W.M."/>
            <person name="Rubin G.M."/>
            <person name="Lewis S.E."/>
        </authorList>
    </citation>
    <scope>GENOME REANNOTATION</scope>
    <source>
        <strain>Berkeley</strain>
    </source>
</reference>
<reference evidence="8 10" key="4">
    <citation type="journal article" date="2002" name="Genome Biol.">
        <title>A Drosophila full-length cDNA resource.</title>
        <authorList>
            <person name="Stapleton M."/>
            <person name="Carlson J.W."/>
            <person name="Brokstein P."/>
            <person name="Yu C."/>
            <person name="Champe M."/>
            <person name="George R.A."/>
            <person name="Guarin H."/>
            <person name="Kronmiller B."/>
            <person name="Pacleb J.M."/>
            <person name="Park S."/>
            <person name="Wan K.H."/>
            <person name="Rubin G.M."/>
            <person name="Celniker S.E."/>
        </authorList>
    </citation>
    <scope>NUCLEOTIDE SEQUENCE [LARGE SCALE MRNA]</scope>
    <source>
        <strain evidence="6">Berkeley</strain>
        <tissue evidence="6">Embryo</tissue>
    </source>
</reference>
<reference evidence="8 11" key="5">
    <citation type="journal article" date="1994" name="J. Cell Biol.">
        <title>Localization of Sed5, a putative vesicle targeting molecule, to the cis-Golgi network involves both its transmembrane and cytoplasmic domains.</title>
        <authorList>
            <person name="Banfield D.K."/>
            <person name="Lewis M.J."/>
            <person name="Rabouille C."/>
            <person name="Warren G."/>
            <person name="Pelham H.R."/>
        </authorList>
    </citation>
    <scope>NUCLEOTIDE SEQUENCE [MRNA] OF 158-467</scope>
    <scope>HOMODIMERIZATION</scope>
    <scope>SUBCELLULAR LOCATION</scope>
    <source>
        <strain evidence="11">Barton</strain>
        <tissue evidence="7">Embryo</tissue>
    </source>
</reference>